<comment type="function">
    <text evidence="2">Catalyzes the O-glycosylation of multiple protein targets. Is responsible for general protein glycosylation within A.baylyi ADP1. Does not act as an O-antigen ligase.</text>
</comment>
<comment type="subcellular location">
    <subcellularLocation>
        <location evidence="1">Cell membrane</location>
        <topology evidence="1">Multi-pass membrane protein</topology>
    </subcellularLocation>
</comment>
<comment type="disruption phenotype">
    <text evidence="2">Cells lacking this gene lose the ability to glycosylate substrate proteins and their glycoproteome is highly affected.</text>
</comment>
<comment type="similarity">
    <text evidence="4">Belongs to the PglL O-oligosaccharyltransferase family.</text>
</comment>
<name>PGLL1_ACIAD</name>
<sequence>MAGSPRVYNSQHCGFSVAVMRFLLLLLTAVLISLAWLSPDHSYPWLTFASEMLSFAAFLSLLALFLNRPLELPRVQLLALPVVFIPMIQWGFGLVVDFSSALLSSAYLLGFWLTMLLGYNLSRSSADRERMFTLSSYLLFAVALLTSLIACIQWLNLESHVPGVMNLYSHRPYANFAQPNNMSTFLILGLLGCLYLAEKQKLKQYYIWPVAALIVFAITLSQSRTAWVFGLFFIIYWTYKSWRYPTHLKRYAVLLWAIGFFAVGLLFPRFTRLIQKLKEGNVVQTSSVVERASAGHERLGIWQQMLDAIHQKPWTGYGWNQTSIAELSSMSSNTIHVWFTSAHNVVLDLLVWNGWLLGGLITICILIWICWLNVHAKTTESIIACLMVSAVWIHTLLEYPLQYAYFLLPVGFLMGLIQAQTPDQTARSVPVSVIRSIWVIGIMLLALIWRDYNLYKVNSLRILKNQPANIEIWGSSKILVLTEFDQRLYWLKLSPVAPLTSTELDQIEKMVQNKATPYNLQKYAQLLLANHQFEKAQQQIAYLNRLHKKDYTLQDLQQANASAVESSK</sequence>
<gene>
    <name evidence="4" type="primary">pglL1</name>
    <name evidence="3" type="synonym">pglL</name>
    <name evidence="6" type="ordered locus">ACIAD0103</name>
</gene>
<keyword id="KW-1003">Cell membrane</keyword>
<keyword id="KW-0328">Glycosyltransferase</keyword>
<keyword id="KW-0472">Membrane</keyword>
<keyword id="KW-0808">Transferase</keyword>
<keyword id="KW-0812">Transmembrane</keyword>
<keyword id="KW-1133">Transmembrane helix</keyword>
<organism>
    <name type="scientific">Acinetobacter baylyi (strain ATCC 33305 / BD413 / ADP1)</name>
    <dbReference type="NCBI Taxonomy" id="62977"/>
    <lineage>
        <taxon>Bacteria</taxon>
        <taxon>Pseudomonadati</taxon>
        <taxon>Pseudomonadota</taxon>
        <taxon>Gammaproteobacteria</taxon>
        <taxon>Moraxellales</taxon>
        <taxon>Moraxellaceae</taxon>
        <taxon>Acinetobacter</taxon>
    </lineage>
</organism>
<reference key="1">
    <citation type="journal article" date="2004" name="Nucleic Acids Res.">
        <title>Unique features revealed by the genome sequence of Acinetobacter sp. ADP1, a versatile and naturally transformation competent bacterium.</title>
        <authorList>
            <person name="Barbe V."/>
            <person name="Vallenet D."/>
            <person name="Fonknechten N."/>
            <person name="Kreimeyer A."/>
            <person name="Oztas S."/>
            <person name="Labarre L."/>
            <person name="Cruveiller S."/>
            <person name="Robert C."/>
            <person name="Duprat S."/>
            <person name="Wincker P."/>
            <person name="Ornston L.N."/>
            <person name="Weissenbach J."/>
            <person name="Marliere P."/>
            <person name="Cohen G.N."/>
            <person name="Medigue C."/>
        </authorList>
    </citation>
    <scope>NUCLEOTIDE SEQUENCE [LARGE SCALE GENOMIC DNA]</scope>
    <source>
        <strain>ATCC 33305 / BD413 / ADP1</strain>
    </source>
</reference>
<reference key="2">
    <citation type="journal article" date="2015" name="Mol. Microbiol.">
        <title>Acinetobacter strains carry two functional oligosaccharyltransferases, one devoted exclusively to type IV pilin, and the other one dedicated to O-glycosylation of multiple proteins.</title>
        <authorList>
            <person name="Harding C.M."/>
            <person name="Nasr M.A."/>
            <person name="Kinsella R.L."/>
            <person name="Scott N.E."/>
            <person name="Foster L.J."/>
            <person name="Weber B.S."/>
            <person name="Fiester S.E."/>
            <person name="Actis L.A."/>
            <person name="Tracy E.N."/>
            <person name="Munson R.S. Jr."/>
            <person name="Feldman M.F."/>
        </authorList>
    </citation>
    <scope>FUNCTION</scope>
    <scope>DISRUPTION PHENOTYPE</scope>
    <source>
        <strain>ATCC 33305 / BD413 / ADP1</strain>
    </source>
</reference>
<dbReference type="EC" id="2.4.-.-" evidence="5"/>
<dbReference type="EMBL" id="CR543861">
    <property type="protein sequence ID" value="CAG67081.1"/>
    <property type="molecule type" value="Genomic_DNA"/>
</dbReference>
<dbReference type="SMR" id="Q6FFS6"/>
<dbReference type="STRING" id="202950.GCA_001485005_01842"/>
<dbReference type="KEGG" id="aci:ACIAD0103"/>
<dbReference type="eggNOG" id="COG3307">
    <property type="taxonomic scope" value="Bacteria"/>
</dbReference>
<dbReference type="HOGENOM" id="CLU_031791_1_0_6"/>
<dbReference type="OrthoDB" id="4448at2"/>
<dbReference type="BioCyc" id="ASP62977:ACIAD_RS00480-MONOMER"/>
<dbReference type="Proteomes" id="UP000000430">
    <property type="component" value="Chromosome"/>
</dbReference>
<dbReference type="GO" id="GO:0005886">
    <property type="term" value="C:plasma membrane"/>
    <property type="evidence" value="ECO:0007669"/>
    <property type="project" value="UniProtKB-SubCell"/>
</dbReference>
<dbReference type="GO" id="GO:0016757">
    <property type="term" value="F:glycosyltransferase activity"/>
    <property type="evidence" value="ECO:0000315"/>
    <property type="project" value="UniProtKB"/>
</dbReference>
<dbReference type="GO" id="GO:0006486">
    <property type="term" value="P:protein glycosylation"/>
    <property type="evidence" value="ECO:0000315"/>
    <property type="project" value="UniProtKB"/>
</dbReference>
<dbReference type="InterPro" id="IPR007016">
    <property type="entry name" value="O-antigen_ligase-rel_domated"/>
</dbReference>
<dbReference type="InterPro" id="IPR031726">
    <property type="entry name" value="PglL_A"/>
</dbReference>
<dbReference type="InterPro" id="IPR051533">
    <property type="entry name" value="WaaL-like"/>
</dbReference>
<dbReference type="InterPro" id="IPR021797">
    <property type="entry name" value="Wzy_C_2"/>
</dbReference>
<dbReference type="PANTHER" id="PTHR37422:SF13">
    <property type="entry name" value="LIPOPOLYSACCHARIDE BIOSYNTHESIS PROTEIN PA4999-RELATED"/>
    <property type="match status" value="1"/>
</dbReference>
<dbReference type="PANTHER" id="PTHR37422">
    <property type="entry name" value="TEICHURONIC ACID BIOSYNTHESIS PROTEIN TUAE"/>
    <property type="match status" value="1"/>
</dbReference>
<dbReference type="Pfam" id="PF15864">
    <property type="entry name" value="PglL_A"/>
    <property type="match status" value="1"/>
</dbReference>
<dbReference type="Pfam" id="PF04932">
    <property type="entry name" value="Wzy_C"/>
    <property type="match status" value="1"/>
</dbReference>
<dbReference type="Pfam" id="PF11846">
    <property type="entry name" value="Wzy_C_2"/>
    <property type="match status" value="1"/>
</dbReference>
<proteinExistence type="inferred from homology"/>
<protein>
    <recommendedName>
        <fullName evidence="3">General O-oligosaccharyltransferase</fullName>
        <shortName evidence="3">General O-OTase</shortName>
        <ecNumber evidence="5">2.4.-.-</ecNumber>
    </recommendedName>
</protein>
<feature type="chain" id="PRO_0000433786" description="General O-oligosaccharyltransferase">
    <location>
        <begin position="1"/>
        <end position="568"/>
    </location>
</feature>
<feature type="transmembrane region" description="Helical" evidence="1">
    <location>
        <begin position="17"/>
        <end position="37"/>
    </location>
</feature>
<feature type="transmembrane region" description="Helical" evidence="1">
    <location>
        <begin position="46"/>
        <end position="66"/>
    </location>
</feature>
<feature type="transmembrane region" description="Helical" evidence="1">
    <location>
        <begin position="78"/>
        <end position="98"/>
    </location>
</feature>
<feature type="transmembrane region" description="Helical" evidence="1">
    <location>
        <begin position="101"/>
        <end position="121"/>
    </location>
</feature>
<feature type="transmembrane region" description="Helical" evidence="1">
    <location>
        <begin position="132"/>
        <end position="152"/>
    </location>
</feature>
<feature type="transmembrane region" description="Helical" evidence="1">
    <location>
        <begin position="176"/>
        <end position="196"/>
    </location>
</feature>
<feature type="transmembrane region" description="Helical" evidence="1">
    <location>
        <begin position="214"/>
        <end position="234"/>
    </location>
</feature>
<feature type="transmembrane region" description="Helical" evidence="1">
    <location>
        <begin position="251"/>
        <end position="271"/>
    </location>
</feature>
<feature type="transmembrane region" description="Helical" evidence="1">
    <location>
        <begin position="349"/>
        <end position="369"/>
    </location>
</feature>
<feature type="transmembrane region" description="Helical" evidence="1">
    <location>
        <begin position="376"/>
        <end position="396"/>
    </location>
</feature>
<feature type="transmembrane region" description="Helical" evidence="1">
    <location>
        <begin position="397"/>
        <end position="417"/>
    </location>
</feature>
<feature type="transmembrane region" description="Helical" evidence="1">
    <location>
        <begin position="429"/>
        <end position="449"/>
    </location>
</feature>
<evidence type="ECO:0000255" key="1"/>
<evidence type="ECO:0000269" key="2">
    <source>
    </source>
</evidence>
<evidence type="ECO:0000303" key="3">
    <source>
    </source>
</evidence>
<evidence type="ECO:0000305" key="4"/>
<evidence type="ECO:0000305" key="5">
    <source>
    </source>
</evidence>
<evidence type="ECO:0000312" key="6">
    <source>
        <dbReference type="EMBL" id="CAG67081.1"/>
    </source>
</evidence>
<accession>Q6FFS6</accession>